<organism>
    <name type="scientific">Salmonella typhi</name>
    <dbReference type="NCBI Taxonomy" id="90370"/>
    <lineage>
        <taxon>Bacteria</taxon>
        <taxon>Pseudomonadati</taxon>
        <taxon>Pseudomonadota</taxon>
        <taxon>Gammaproteobacteria</taxon>
        <taxon>Enterobacterales</taxon>
        <taxon>Enterobacteriaceae</taxon>
        <taxon>Salmonella</taxon>
    </lineage>
</organism>
<gene>
    <name evidence="1" type="primary">rhaB</name>
    <name type="ordered locus">STY3826</name>
    <name type="ordered locus">t3572</name>
</gene>
<keyword id="KW-0067">ATP-binding</keyword>
<keyword id="KW-1015">Disulfide bond</keyword>
<keyword id="KW-0418">Kinase</keyword>
<keyword id="KW-0460">Magnesium</keyword>
<keyword id="KW-0547">Nucleotide-binding</keyword>
<keyword id="KW-0684">Rhamnose metabolism</keyword>
<keyword id="KW-0808">Transferase</keyword>
<sequence>MTFRHCVAVDLGASSGRVMLARYDSKHRTLTLREIHRFVNCLQKTDGFDTWDIDSLEKDIRLGLKKVCNEGILIDSIGIDTWGVDYVLLDKQGQRVGLPVSYRDNRTTGIMPQALVQIGKSEIYRRSGIQFLPFNTIYQLRALTKQQPELTAQVAHALLMPDYFSYRLTGEMNWEYTNATTTQLVNINTDDWDDTLLAWTGAKKSWFGRPSHPGNVIGDWICPQGNRIPVVAVASHDTASAVIASPLANKHSAYLSSGTWSLMGFESKKPYTTDEALAANITNEGGAEGRYRVLKNIMGLWLLQRVLKERRITDLPVLIAQTEALPACRFLINPNDDRFINPDDMRAEIQAACRETDQPVPVSDAELARCIFDSLALLYADILHELANLRGEKFTQLHIVGGGCQNALLNQLCANACGIRVMAGPVEASTLGNIGIQLMTLDELNNVDDFRQVVSANYDLTTYIPNPDSEIARHVAQFQPKRQTKELCA</sequence>
<accession>Q8Z2V4</accession>
<accession>Q7C6M9</accession>
<proteinExistence type="inferred from homology"/>
<dbReference type="EC" id="2.7.1.5" evidence="1"/>
<dbReference type="EMBL" id="AL513382">
    <property type="protein sequence ID" value="CAD09577.1"/>
    <property type="molecule type" value="Genomic_DNA"/>
</dbReference>
<dbReference type="EMBL" id="AE014613">
    <property type="protein sequence ID" value="AAO71076.1"/>
    <property type="molecule type" value="Genomic_DNA"/>
</dbReference>
<dbReference type="RefSeq" id="NP_458003.1">
    <property type="nucleotide sequence ID" value="NC_003198.1"/>
</dbReference>
<dbReference type="RefSeq" id="WP_000143961.1">
    <property type="nucleotide sequence ID" value="NZ_WSUR01000010.1"/>
</dbReference>
<dbReference type="SMR" id="Q8Z2V4"/>
<dbReference type="STRING" id="220341.gene:17587688"/>
<dbReference type="KEGG" id="stt:t3572"/>
<dbReference type="KEGG" id="sty:STY3826"/>
<dbReference type="PATRIC" id="fig|220341.7.peg.3906"/>
<dbReference type="eggNOG" id="COG1070">
    <property type="taxonomic scope" value="Bacteria"/>
</dbReference>
<dbReference type="HOGENOM" id="CLU_039395_0_0_6"/>
<dbReference type="OMA" id="HYRDART"/>
<dbReference type="OrthoDB" id="9761504at2"/>
<dbReference type="UniPathway" id="UPA00541">
    <property type="reaction ID" value="UER00602"/>
</dbReference>
<dbReference type="Proteomes" id="UP000000541">
    <property type="component" value="Chromosome"/>
</dbReference>
<dbReference type="Proteomes" id="UP000002670">
    <property type="component" value="Chromosome"/>
</dbReference>
<dbReference type="GO" id="GO:0005829">
    <property type="term" value="C:cytosol"/>
    <property type="evidence" value="ECO:0007669"/>
    <property type="project" value="TreeGrafter"/>
</dbReference>
<dbReference type="GO" id="GO:0005524">
    <property type="term" value="F:ATP binding"/>
    <property type="evidence" value="ECO:0007669"/>
    <property type="project" value="UniProtKB-KW"/>
</dbReference>
<dbReference type="GO" id="GO:0004370">
    <property type="term" value="F:glycerol kinase activity"/>
    <property type="evidence" value="ECO:0007669"/>
    <property type="project" value="TreeGrafter"/>
</dbReference>
<dbReference type="GO" id="GO:0008993">
    <property type="term" value="F:rhamnulokinase activity"/>
    <property type="evidence" value="ECO:0007669"/>
    <property type="project" value="UniProtKB-UniRule"/>
</dbReference>
<dbReference type="GO" id="GO:0006071">
    <property type="term" value="P:glycerol metabolic process"/>
    <property type="evidence" value="ECO:0007669"/>
    <property type="project" value="TreeGrafter"/>
</dbReference>
<dbReference type="GO" id="GO:0019301">
    <property type="term" value="P:rhamnose catabolic process"/>
    <property type="evidence" value="ECO:0007669"/>
    <property type="project" value="UniProtKB-UniRule"/>
</dbReference>
<dbReference type="CDD" id="cd07771">
    <property type="entry name" value="ASKHA_NBD_FGGY_RhaB-like"/>
    <property type="match status" value="1"/>
</dbReference>
<dbReference type="FunFam" id="3.30.420.40:FF:000064">
    <property type="entry name" value="Rhamnulokinase"/>
    <property type="match status" value="1"/>
</dbReference>
<dbReference type="FunFam" id="3.30.420.40:FF:000073">
    <property type="entry name" value="Rhamnulokinase"/>
    <property type="match status" value="1"/>
</dbReference>
<dbReference type="Gene3D" id="3.30.420.40">
    <property type="match status" value="2"/>
</dbReference>
<dbReference type="HAMAP" id="MF_01535">
    <property type="entry name" value="Rhamnulokinase"/>
    <property type="match status" value="1"/>
</dbReference>
<dbReference type="InterPro" id="IPR043129">
    <property type="entry name" value="ATPase_NBD"/>
</dbReference>
<dbReference type="InterPro" id="IPR018485">
    <property type="entry name" value="FGGY_C"/>
</dbReference>
<dbReference type="InterPro" id="IPR018484">
    <property type="entry name" value="FGGY_N"/>
</dbReference>
<dbReference type="InterPro" id="IPR013449">
    <property type="entry name" value="Rhamnulokinase"/>
</dbReference>
<dbReference type="NCBIfam" id="NF007925">
    <property type="entry name" value="PRK10640.1"/>
    <property type="match status" value="1"/>
</dbReference>
<dbReference type="NCBIfam" id="TIGR02627">
    <property type="entry name" value="rhamnulo_kin"/>
    <property type="match status" value="1"/>
</dbReference>
<dbReference type="PANTHER" id="PTHR10196:SF93">
    <property type="entry name" value="L-RHAMNULOKINASE"/>
    <property type="match status" value="1"/>
</dbReference>
<dbReference type="PANTHER" id="PTHR10196">
    <property type="entry name" value="SUGAR KINASE"/>
    <property type="match status" value="1"/>
</dbReference>
<dbReference type="Pfam" id="PF02782">
    <property type="entry name" value="FGGY_C"/>
    <property type="match status" value="1"/>
</dbReference>
<dbReference type="Pfam" id="PF00370">
    <property type="entry name" value="FGGY_N"/>
    <property type="match status" value="1"/>
</dbReference>
<dbReference type="SUPFAM" id="SSF53067">
    <property type="entry name" value="Actin-like ATPase domain"/>
    <property type="match status" value="2"/>
</dbReference>
<evidence type="ECO:0000255" key="1">
    <source>
        <dbReference type="HAMAP-Rule" id="MF_01535"/>
    </source>
</evidence>
<name>RHAB_SALTI</name>
<protein>
    <recommendedName>
        <fullName evidence="1">Rhamnulokinase</fullName>
        <shortName evidence="1">RhaB</shortName>
        <ecNumber evidence="1">2.7.1.5</ecNumber>
    </recommendedName>
    <alternativeName>
        <fullName evidence="1">ATP:L-rhamnulose phosphotransferase</fullName>
    </alternativeName>
    <alternativeName>
        <fullName evidence="1">L-rhamnulose 1-kinase</fullName>
    </alternativeName>
    <alternativeName>
        <fullName evidence="1">Rhamnulose kinase</fullName>
    </alternativeName>
</protein>
<reference key="1">
    <citation type="journal article" date="2001" name="Nature">
        <title>Complete genome sequence of a multiple drug resistant Salmonella enterica serovar Typhi CT18.</title>
        <authorList>
            <person name="Parkhill J."/>
            <person name="Dougan G."/>
            <person name="James K.D."/>
            <person name="Thomson N.R."/>
            <person name="Pickard D."/>
            <person name="Wain J."/>
            <person name="Churcher C.M."/>
            <person name="Mungall K.L."/>
            <person name="Bentley S.D."/>
            <person name="Holden M.T.G."/>
            <person name="Sebaihia M."/>
            <person name="Baker S."/>
            <person name="Basham D."/>
            <person name="Brooks K."/>
            <person name="Chillingworth T."/>
            <person name="Connerton P."/>
            <person name="Cronin A."/>
            <person name="Davis P."/>
            <person name="Davies R.M."/>
            <person name="Dowd L."/>
            <person name="White N."/>
            <person name="Farrar J."/>
            <person name="Feltwell T."/>
            <person name="Hamlin N."/>
            <person name="Haque A."/>
            <person name="Hien T.T."/>
            <person name="Holroyd S."/>
            <person name="Jagels K."/>
            <person name="Krogh A."/>
            <person name="Larsen T.S."/>
            <person name="Leather S."/>
            <person name="Moule S."/>
            <person name="O'Gaora P."/>
            <person name="Parry C."/>
            <person name="Quail M.A."/>
            <person name="Rutherford K.M."/>
            <person name="Simmonds M."/>
            <person name="Skelton J."/>
            <person name="Stevens K."/>
            <person name="Whitehead S."/>
            <person name="Barrell B.G."/>
        </authorList>
    </citation>
    <scope>NUCLEOTIDE SEQUENCE [LARGE SCALE GENOMIC DNA]</scope>
    <source>
        <strain>CT18</strain>
    </source>
</reference>
<reference key="2">
    <citation type="journal article" date="2003" name="J. Bacteriol.">
        <title>Comparative genomics of Salmonella enterica serovar Typhi strains Ty2 and CT18.</title>
        <authorList>
            <person name="Deng W."/>
            <person name="Liou S.-R."/>
            <person name="Plunkett G. III"/>
            <person name="Mayhew G.F."/>
            <person name="Rose D.J."/>
            <person name="Burland V."/>
            <person name="Kodoyianni V."/>
            <person name="Schwartz D.C."/>
            <person name="Blattner F.R."/>
        </authorList>
    </citation>
    <scope>NUCLEOTIDE SEQUENCE [LARGE SCALE GENOMIC DNA]</scope>
    <source>
        <strain>ATCC 700931 / Ty2</strain>
    </source>
</reference>
<comment type="function">
    <text evidence="1">Involved in the catabolism of L-rhamnose (6-deoxy-L-mannose). Catalyzes the transfer of the gamma-phosphate group from ATP to the 1-hydroxyl group of L-rhamnulose to yield L-rhamnulose 1-phosphate.</text>
</comment>
<comment type="catalytic activity">
    <reaction evidence="1">
        <text>L-rhamnulose + ATP = L-rhamnulose 1-phosphate + ADP + H(+)</text>
        <dbReference type="Rhea" id="RHEA:20117"/>
        <dbReference type="ChEBI" id="CHEBI:15378"/>
        <dbReference type="ChEBI" id="CHEBI:17897"/>
        <dbReference type="ChEBI" id="CHEBI:30616"/>
        <dbReference type="ChEBI" id="CHEBI:58313"/>
        <dbReference type="ChEBI" id="CHEBI:456216"/>
        <dbReference type="EC" id="2.7.1.5"/>
    </reaction>
</comment>
<comment type="cofactor">
    <cofactor evidence="1">
        <name>Mg(2+)</name>
        <dbReference type="ChEBI" id="CHEBI:18420"/>
    </cofactor>
</comment>
<comment type="pathway">
    <text evidence="1">Carbohydrate degradation; L-rhamnose degradation; glycerone phosphate from L-rhamnose: step 2/3.</text>
</comment>
<comment type="similarity">
    <text evidence="1">Belongs to the rhamnulokinase family.</text>
</comment>
<feature type="chain" id="PRO_0000090544" description="Rhamnulokinase">
    <location>
        <begin position="1"/>
        <end position="489"/>
    </location>
</feature>
<feature type="active site" description="Proton acceptor" evidence="1">
    <location>
        <position position="237"/>
    </location>
</feature>
<feature type="binding site" evidence="1">
    <location>
        <begin position="13"/>
        <end position="17"/>
    </location>
    <ligand>
        <name>ATP</name>
        <dbReference type="ChEBI" id="CHEBI:30616"/>
    </ligand>
</feature>
<feature type="binding site" evidence="1">
    <location>
        <position position="83"/>
    </location>
    <ligand>
        <name>substrate</name>
    </ligand>
</feature>
<feature type="binding site" evidence="1">
    <location>
        <begin position="236"/>
        <end position="238"/>
    </location>
    <ligand>
        <name>substrate</name>
    </ligand>
</feature>
<feature type="binding site" evidence="1">
    <location>
        <position position="259"/>
    </location>
    <ligand>
        <name>ATP</name>
        <dbReference type="ChEBI" id="CHEBI:30616"/>
    </ligand>
</feature>
<feature type="binding site" evidence="1">
    <location>
        <position position="296"/>
    </location>
    <ligand>
        <name>substrate</name>
    </ligand>
</feature>
<feature type="binding site" evidence="1">
    <location>
        <position position="304"/>
    </location>
    <ligand>
        <name>ATP</name>
        <dbReference type="ChEBI" id="CHEBI:30616"/>
    </ligand>
</feature>
<feature type="binding site" evidence="1">
    <location>
        <position position="402"/>
    </location>
    <ligand>
        <name>ATP</name>
        <dbReference type="ChEBI" id="CHEBI:30616"/>
    </ligand>
</feature>
<feature type="disulfide bond" evidence="1">
    <location>
        <begin position="68"/>
        <end position="222"/>
    </location>
</feature>
<feature type="disulfide bond" evidence="1">
    <location>
        <begin position="353"/>
        <end position="370"/>
    </location>
</feature>
<feature type="disulfide bond" evidence="1">
    <location>
        <begin position="413"/>
        <end position="417"/>
    </location>
</feature>